<reference key="1">
    <citation type="journal article" date="2011" name="Proc. Natl. Acad. Sci. U.S.A.">
        <title>Obligate biotrophy features unraveled by the genomic analysis of rust fungi.</title>
        <authorList>
            <person name="Duplessis S."/>
            <person name="Cuomo C.A."/>
            <person name="Lin Y.-C."/>
            <person name="Aerts A."/>
            <person name="Tisserant E."/>
            <person name="Veneault-Fourrey C."/>
            <person name="Joly D.L."/>
            <person name="Hacquard S."/>
            <person name="Amselem J."/>
            <person name="Cantarel B.L."/>
            <person name="Chiu R."/>
            <person name="Coutinho P.M."/>
            <person name="Feau N."/>
            <person name="Field M."/>
            <person name="Frey P."/>
            <person name="Gelhaye E."/>
            <person name="Goldberg J."/>
            <person name="Grabherr M.G."/>
            <person name="Kodira C.D."/>
            <person name="Kohler A."/>
            <person name="Kuees U."/>
            <person name="Lindquist E.A."/>
            <person name="Lucas S.M."/>
            <person name="Mago R."/>
            <person name="Mauceli E."/>
            <person name="Morin E."/>
            <person name="Murat C."/>
            <person name="Pangilinan J.L."/>
            <person name="Park R."/>
            <person name="Pearson M."/>
            <person name="Quesneville H."/>
            <person name="Rouhier N."/>
            <person name="Sakthikumar S."/>
            <person name="Salamov A.A."/>
            <person name="Schmutz J."/>
            <person name="Selles B."/>
            <person name="Shapiro H."/>
            <person name="Tanguay P."/>
            <person name="Tuskan G.A."/>
            <person name="Henrissat B."/>
            <person name="Van de Peer Y."/>
            <person name="Rouze P."/>
            <person name="Ellis J.G."/>
            <person name="Dodds P.N."/>
            <person name="Schein J.E."/>
            <person name="Zhong S."/>
            <person name="Hamelin R.C."/>
            <person name="Grigoriev I.V."/>
            <person name="Szabo L.J."/>
            <person name="Martin F."/>
        </authorList>
    </citation>
    <scope>NUCLEOTIDE SEQUENCE [LARGE SCALE GENOMIC DNA]</scope>
    <source>
        <strain>CRL 75-36-700-3 / race SCCL</strain>
    </source>
</reference>
<reference key="2">
    <citation type="journal article" date="2017" name="G3 (Bethesda)">
        <title>Comparative analysis highlights variable genome content of wheat rusts and divergence of the mating loci.</title>
        <authorList>
            <person name="Cuomo C.A."/>
            <person name="Bakkeren G."/>
            <person name="Khalil H.B."/>
            <person name="Panwar V."/>
            <person name="Joly D."/>
            <person name="Linning R."/>
            <person name="Sakthikumar S."/>
            <person name="Song X."/>
            <person name="Adiconis X."/>
            <person name="Fan L."/>
            <person name="Goldberg J.M."/>
            <person name="Levin J.Z."/>
            <person name="Young S."/>
            <person name="Zeng Q."/>
            <person name="Anikster Y."/>
            <person name="Bruce M."/>
            <person name="Wang M."/>
            <person name="Yin C."/>
            <person name="McCallum B."/>
            <person name="Szabo L.J."/>
            <person name="Hulbert S."/>
            <person name="Chen X."/>
            <person name="Fellers J.P."/>
        </authorList>
    </citation>
    <scope>GENOME REANNOTATION</scope>
    <source>
        <strain>CRL 75-36-700-3 / race SCCL</strain>
    </source>
</reference>
<name>RU1C2_PUCGT</name>
<organism>
    <name type="scientific">Puccinia graminis f. sp. tritici (strain CRL 75-36-700-3 / race SCCL)</name>
    <name type="common">Black stem rust fungus</name>
    <dbReference type="NCBI Taxonomy" id="418459"/>
    <lineage>
        <taxon>Eukaryota</taxon>
        <taxon>Fungi</taxon>
        <taxon>Dikarya</taxon>
        <taxon>Basidiomycota</taxon>
        <taxon>Pucciniomycotina</taxon>
        <taxon>Pucciniomycetes</taxon>
        <taxon>Pucciniales</taxon>
        <taxon>Pucciniaceae</taxon>
        <taxon>Puccinia</taxon>
    </lineage>
</organism>
<evidence type="ECO:0000255" key="1">
    <source>
        <dbReference type="HAMAP-Rule" id="MF_03153"/>
    </source>
</evidence>
<evidence type="ECO:0000256" key="2">
    <source>
        <dbReference type="SAM" id="MobiDB-lite"/>
    </source>
</evidence>
<protein>
    <recommendedName>
        <fullName evidence="1">U1 small nuclear ribonucleoprotein C-2</fullName>
        <shortName evidence="1">U1 snRNP C-2</shortName>
        <shortName evidence="1">U1-C-2</shortName>
        <shortName evidence="1">U1C-2</shortName>
    </recommendedName>
</protein>
<gene>
    <name type="ORF">PGTG_10639</name>
</gene>
<proteinExistence type="inferred from homology"/>
<dbReference type="EMBL" id="DS178289">
    <property type="protein sequence ID" value="EFP84261.1"/>
    <property type="molecule type" value="Genomic_DNA"/>
</dbReference>
<dbReference type="RefSeq" id="XP_003328680.1">
    <property type="nucleotide sequence ID" value="XM_003328632.2"/>
</dbReference>
<dbReference type="SMR" id="E3KIY6"/>
<dbReference type="FunCoup" id="E3KIY6">
    <property type="interactions" value="88"/>
</dbReference>
<dbReference type="STRING" id="418459.E3KIY6"/>
<dbReference type="EnsemblFungi" id="EFP84261">
    <property type="protein sequence ID" value="EFP84261"/>
    <property type="gene ID" value="PGTG_10639"/>
</dbReference>
<dbReference type="GeneID" id="10545523"/>
<dbReference type="KEGG" id="pgr:PGTG_10639"/>
<dbReference type="VEuPathDB" id="FungiDB:PGTG_10639"/>
<dbReference type="HOGENOM" id="CLU_079697_1_0_1"/>
<dbReference type="InParanoid" id="E3KIY6"/>
<dbReference type="OrthoDB" id="76567at2759"/>
<dbReference type="Proteomes" id="UP000008783">
    <property type="component" value="Unassembled WGS sequence"/>
</dbReference>
<dbReference type="GO" id="GO:0000243">
    <property type="term" value="C:commitment complex"/>
    <property type="evidence" value="ECO:0007669"/>
    <property type="project" value="UniProtKB-UniRule"/>
</dbReference>
<dbReference type="GO" id="GO:0005685">
    <property type="term" value="C:U1 snRNP"/>
    <property type="evidence" value="ECO:0000318"/>
    <property type="project" value="GO_Central"/>
</dbReference>
<dbReference type="GO" id="GO:0071004">
    <property type="term" value="C:U2-type prespliceosome"/>
    <property type="evidence" value="ECO:0007669"/>
    <property type="project" value="UniProtKB-UniRule"/>
</dbReference>
<dbReference type="GO" id="GO:0003729">
    <property type="term" value="F:mRNA binding"/>
    <property type="evidence" value="ECO:0007669"/>
    <property type="project" value="UniProtKB-UniRule"/>
</dbReference>
<dbReference type="GO" id="GO:0030627">
    <property type="term" value="F:pre-mRNA 5'-splice site binding"/>
    <property type="evidence" value="ECO:0000318"/>
    <property type="project" value="GO_Central"/>
</dbReference>
<dbReference type="GO" id="GO:0030619">
    <property type="term" value="F:U1 snRNA binding"/>
    <property type="evidence" value="ECO:0007669"/>
    <property type="project" value="UniProtKB-UniRule"/>
</dbReference>
<dbReference type="GO" id="GO:0008270">
    <property type="term" value="F:zinc ion binding"/>
    <property type="evidence" value="ECO:0007669"/>
    <property type="project" value="UniProtKB-UniRule"/>
</dbReference>
<dbReference type="GO" id="GO:0000395">
    <property type="term" value="P:mRNA 5'-splice site recognition"/>
    <property type="evidence" value="ECO:0000318"/>
    <property type="project" value="GO_Central"/>
</dbReference>
<dbReference type="GO" id="GO:0000387">
    <property type="term" value="P:spliceosomal snRNP assembly"/>
    <property type="evidence" value="ECO:0007669"/>
    <property type="project" value="UniProtKB-UniRule"/>
</dbReference>
<dbReference type="FunFam" id="3.30.160.60:FF:000059">
    <property type="entry name" value="U1 small nuclear ribonucleoprotein C"/>
    <property type="match status" value="1"/>
</dbReference>
<dbReference type="Gene3D" id="3.30.160.60">
    <property type="entry name" value="Classic Zinc Finger"/>
    <property type="match status" value="1"/>
</dbReference>
<dbReference type="HAMAP" id="MF_03153">
    <property type="entry name" value="U1_C"/>
    <property type="match status" value="1"/>
</dbReference>
<dbReference type="InterPro" id="IPR000690">
    <property type="entry name" value="Matrin/U1-C_Znf_C2H2"/>
</dbReference>
<dbReference type="InterPro" id="IPR003604">
    <property type="entry name" value="Matrin/U1-like-C_Znf_C2H2"/>
</dbReference>
<dbReference type="InterPro" id="IPR013085">
    <property type="entry name" value="U1-CZ_Znf_C2H2"/>
</dbReference>
<dbReference type="InterPro" id="IPR017340">
    <property type="entry name" value="U1_snRNP-C"/>
</dbReference>
<dbReference type="InterPro" id="IPR036236">
    <property type="entry name" value="Znf_C2H2_sf"/>
</dbReference>
<dbReference type="PANTHER" id="PTHR31148">
    <property type="entry name" value="U1 SMALL NUCLEAR RIBONUCLEOPROTEIN C"/>
    <property type="match status" value="1"/>
</dbReference>
<dbReference type="PANTHER" id="PTHR31148:SF1">
    <property type="entry name" value="U1 SMALL NUCLEAR RIBONUCLEOPROTEIN C"/>
    <property type="match status" value="1"/>
</dbReference>
<dbReference type="Pfam" id="PF06220">
    <property type="entry name" value="zf-U1"/>
    <property type="match status" value="1"/>
</dbReference>
<dbReference type="PIRSF" id="PIRSF037969">
    <property type="entry name" value="U1_snRNP-C"/>
    <property type="match status" value="1"/>
</dbReference>
<dbReference type="SMART" id="SM00451">
    <property type="entry name" value="ZnF_U1"/>
    <property type="match status" value="1"/>
</dbReference>
<dbReference type="SUPFAM" id="SSF57667">
    <property type="entry name" value="beta-beta-alpha zinc fingers"/>
    <property type="match status" value="1"/>
</dbReference>
<dbReference type="PROSITE" id="PS50171">
    <property type="entry name" value="ZF_MATRIN"/>
    <property type="match status" value="1"/>
</dbReference>
<accession>E3KIY6</accession>
<comment type="function">
    <text evidence="1">Component of the spliceosomal U1 snRNP, which is essential for recognition of the pre-mRNA 5' splice-site and the subsequent assembly of the spliceosome. U1-C is directly involved in initial 5' splice-site recognition for both constitutive and regulated alternative splicing. The interaction with the 5' splice-site seems to precede base-pairing between the pre-mRNA and the U1 snRNA. Stimulates commitment or early (E) complex formation by stabilizing the base pairing of the 5' end of the U1 snRNA and the 5' splice-site region.</text>
</comment>
<comment type="subunit">
    <text evidence="1">U1 snRNP is composed of the 7 core Sm proteins B/B', D1, D2, D3, E, F and G that assemble in a heptameric protein ring on the Sm site of the small nuclear RNA to form the core snRNP, and at least 3 U1 snRNP-specific proteins U1-70K, U1-A and U1-C. U1-C interacts with U1 snRNA and the 5' splice-site region of the pre-mRNA.</text>
</comment>
<comment type="subcellular location">
    <subcellularLocation>
        <location evidence="1">Nucleus</location>
    </subcellularLocation>
</comment>
<comment type="similarity">
    <text evidence="1">Belongs to the U1 small nuclear ribonucleoprotein C family.</text>
</comment>
<feature type="chain" id="PRO_0000414293" description="U1 small nuclear ribonucleoprotein C-2">
    <location>
        <begin position="1"/>
        <end position="188"/>
    </location>
</feature>
<feature type="zinc finger region" description="Matrin-type" evidence="1">
    <location>
        <begin position="4"/>
        <end position="36"/>
    </location>
</feature>
<feature type="region of interest" description="Disordered" evidence="2">
    <location>
        <begin position="57"/>
        <end position="188"/>
    </location>
</feature>
<feature type="compositionally biased region" description="Pro residues" evidence="2">
    <location>
        <begin position="72"/>
        <end position="82"/>
    </location>
</feature>
<feature type="compositionally biased region" description="Low complexity" evidence="2">
    <location>
        <begin position="109"/>
        <end position="124"/>
    </location>
</feature>
<feature type="compositionally biased region" description="Pro residues" evidence="2">
    <location>
        <begin position="125"/>
        <end position="141"/>
    </location>
</feature>
<keyword id="KW-0479">Metal-binding</keyword>
<keyword id="KW-0539">Nucleus</keyword>
<keyword id="KW-1185">Reference proteome</keyword>
<keyword id="KW-0687">Ribonucleoprotein</keyword>
<keyword id="KW-0694">RNA-binding</keyword>
<keyword id="KW-0862">Zinc</keyword>
<keyword id="KW-0863">Zinc-finger</keyword>
<sequence length="188" mass="19652">MGKYYCDYCDVFLVSESPSVRKAHNSGRNHLTNVRDYYSSLGHDKAQSYIDEITRMFETGGGNSTSNRGPGGNPPGSQPGPPNAGMSGPMRPPFSNSTAGPNMPPLPPAMLALMNGQNGMSSPGSGPPPMRFAGPPIPNNMPPGMMQPPHVNGYSSGPLPPQPQPASGGQGAPPLTARMNPDRARQLG</sequence>